<accession>Q3KKT5</accession>
<gene>
    <name evidence="1" type="primary">mraY</name>
    <name type="ordered locus">CTA_0827</name>
</gene>
<dbReference type="EC" id="2.7.8.13" evidence="1"/>
<dbReference type="EMBL" id="CP000051">
    <property type="protein sequence ID" value="AAX51037.1"/>
    <property type="molecule type" value="Genomic_DNA"/>
</dbReference>
<dbReference type="RefSeq" id="WP_009872137.1">
    <property type="nucleotide sequence ID" value="NC_007429.1"/>
</dbReference>
<dbReference type="SMR" id="Q3KKT5"/>
<dbReference type="KEGG" id="cta:CTA_0827"/>
<dbReference type="HOGENOM" id="CLU_023982_0_1_0"/>
<dbReference type="UniPathway" id="UPA00219"/>
<dbReference type="Proteomes" id="UP000002532">
    <property type="component" value="Chromosome"/>
</dbReference>
<dbReference type="GO" id="GO:0005886">
    <property type="term" value="C:plasma membrane"/>
    <property type="evidence" value="ECO:0007669"/>
    <property type="project" value="UniProtKB-SubCell"/>
</dbReference>
<dbReference type="GO" id="GO:0046872">
    <property type="term" value="F:metal ion binding"/>
    <property type="evidence" value="ECO:0007669"/>
    <property type="project" value="UniProtKB-KW"/>
</dbReference>
<dbReference type="GO" id="GO:0008963">
    <property type="term" value="F:phospho-N-acetylmuramoyl-pentapeptide-transferase activity"/>
    <property type="evidence" value="ECO:0007669"/>
    <property type="project" value="UniProtKB-UniRule"/>
</dbReference>
<dbReference type="GO" id="GO:0051992">
    <property type="term" value="F:UDP-N-acetylmuramoyl-L-alanyl-D-glutamyl-meso-2,6-diaminopimelyl-D-alanyl-D-alanine:undecaprenyl-phosphate transferase activity"/>
    <property type="evidence" value="ECO:0007669"/>
    <property type="project" value="RHEA"/>
</dbReference>
<dbReference type="GO" id="GO:0051301">
    <property type="term" value="P:cell division"/>
    <property type="evidence" value="ECO:0007669"/>
    <property type="project" value="UniProtKB-KW"/>
</dbReference>
<dbReference type="GO" id="GO:0071555">
    <property type="term" value="P:cell wall organization"/>
    <property type="evidence" value="ECO:0007669"/>
    <property type="project" value="UniProtKB-KW"/>
</dbReference>
<dbReference type="GO" id="GO:0009252">
    <property type="term" value="P:peptidoglycan biosynthetic process"/>
    <property type="evidence" value="ECO:0007669"/>
    <property type="project" value="UniProtKB-UniRule"/>
</dbReference>
<dbReference type="GO" id="GO:0008360">
    <property type="term" value="P:regulation of cell shape"/>
    <property type="evidence" value="ECO:0007669"/>
    <property type="project" value="UniProtKB-KW"/>
</dbReference>
<dbReference type="CDD" id="cd06852">
    <property type="entry name" value="GT_MraY"/>
    <property type="match status" value="1"/>
</dbReference>
<dbReference type="HAMAP" id="MF_00038">
    <property type="entry name" value="MraY"/>
    <property type="match status" value="1"/>
</dbReference>
<dbReference type="InterPro" id="IPR000715">
    <property type="entry name" value="Glycosyl_transferase_4"/>
</dbReference>
<dbReference type="InterPro" id="IPR003524">
    <property type="entry name" value="PNAcMuramoyl-5peptid_Trfase"/>
</dbReference>
<dbReference type="InterPro" id="IPR018480">
    <property type="entry name" value="PNAcMuramoyl-5peptid_Trfase_CS"/>
</dbReference>
<dbReference type="NCBIfam" id="TIGR00445">
    <property type="entry name" value="mraY"/>
    <property type="match status" value="1"/>
</dbReference>
<dbReference type="PANTHER" id="PTHR22926">
    <property type="entry name" value="PHOSPHO-N-ACETYLMURAMOYL-PENTAPEPTIDE-TRANSFERASE"/>
    <property type="match status" value="1"/>
</dbReference>
<dbReference type="PANTHER" id="PTHR22926:SF5">
    <property type="entry name" value="PHOSPHO-N-ACETYLMURAMOYL-PENTAPEPTIDE-TRANSFERASE HOMOLOG"/>
    <property type="match status" value="1"/>
</dbReference>
<dbReference type="Pfam" id="PF00953">
    <property type="entry name" value="Glycos_transf_4"/>
    <property type="match status" value="1"/>
</dbReference>
<dbReference type="PROSITE" id="PS01347">
    <property type="entry name" value="MRAY_1"/>
    <property type="match status" value="1"/>
</dbReference>
<dbReference type="PROSITE" id="PS01348">
    <property type="entry name" value="MRAY_2"/>
    <property type="match status" value="1"/>
</dbReference>
<proteinExistence type="inferred from homology"/>
<comment type="function">
    <text evidence="1">Catalyzes the initial step of the lipid cycle reactions in the biosynthesis of the cell wall peptidoglycan: transfers peptidoglycan precursor phospho-MurNAc-pentapeptide from UDP-MurNAc-pentapeptide onto the lipid carrier undecaprenyl phosphate, yielding undecaprenyl-pyrophosphoryl-MurNAc-pentapeptide, known as lipid I.</text>
</comment>
<comment type="catalytic activity">
    <reaction evidence="1">
        <text>UDP-N-acetyl-alpha-D-muramoyl-L-alanyl-gamma-D-glutamyl-meso-2,6-diaminopimeloyl-D-alanyl-D-alanine + di-trans,octa-cis-undecaprenyl phosphate = di-trans,octa-cis-undecaprenyl diphospho-N-acetyl-alpha-D-muramoyl-L-alanyl-D-glutamyl-meso-2,6-diaminopimeloyl-D-alanyl-D-alanine + UMP</text>
        <dbReference type="Rhea" id="RHEA:28386"/>
        <dbReference type="ChEBI" id="CHEBI:57865"/>
        <dbReference type="ChEBI" id="CHEBI:60392"/>
        <dbReference type="ChEBI" id="CHEBI:61386"/>
        <dbReference type="ChEBI" id="CHEBI:61387"/>
        <dbReference type="EC" id="2.7.8.13"/>
    </reaction>
</comment>
<comment type="cofactor">
    <cofactor evidence="1">
        <name>Mg(2+)</name>
        <dbReference type="ChEBI" id="CHEBI:18420"/>
    </cofactor>
</comment>
<comment type="pathway">
    <text evidence="1">Cell wall biogenesis; peptidoglycan biosynthesis.</text>
</comment>
<comment type="subcellular location">
    <subcellularLocation>
        <location evidence="1">Cell inner membrane</location>
        <topology evidence="1">Multi-pass membrane protein</topology>
    </subcellularLocation>
</comment>
<comment type="similarity">
    <text evidence="1">Belongs to the glycosyltransferase 4 family. MraY subfamily.</text>
</comment>
<keyword id="KW-0131">Cell cycle</keyword>
<keyword id="KW-0132">Cell division</keyword>
<keyword id="KW-0997">Cell inner membrane</keyword>
<keyword id="KW-1003">Cell membrane</keyword>
<keyword id="KW-0133">Cell shape</keyword>
<keyword id="KW-0961">Cell wall biogenesis/degradation</keyword>
<keyword id="KW-0460">Magnesium</keyword>
<keyword id="KW-0472">Membrane</keyword>
<keyword id="KW-0479">Metal-binding</keyword>
<keyword id="KW-0573">Peptidoglycan synthesis</keyword>
<keyword id="KW-0808">Transferase</keyword>
<keyword id="KW-0812">Transmembrane</keyword>
<keyword id="KW-1133">Transmembrane helix</keyword>
<reference key="1">
    <citation type="journal article" date="2005" name="Infect. Immun.">
        <title>Comparative genomic analysis of Chlamydia trachomatis oculotropic and genitotropic strains.</title>
        <authorList>
            <person name="Carlson J.H."/>
            <person name="Porcella S.F."/>
            <person name="McClarty G."/>
            <person name="Caldwell H.D."/>
        </authorList>
    </citation>
    <scope>NUCLEOTIDE SEQUENCE [LARGE SCALE GENOMIC DNA]</scope>
    <source>
        <strain>ATCC VR-571B / DSM 19440 / HAR-13</strain>
    </source>
</reference>
<protein>
    <recommendedName>
        <fullName evidence="1">Phospho-N-acetylmuramoyl-pentapeptide-transferase</fullName>
        <ecNumber evidence="1">2.7.8.13</ecNumber>
    </recommendedName>
    <alternativeName>
        <fullName evidence="1">UDP-MurNAc-pentapeptide phosphotransferase</fullName>
    </alternativeName>
</protein>
<name>MRAY_CHLTA</name>
<organism>
    <name type="scientific">Chlamydia trachomatis serovar A (strain ATCC VR-571B / DSM 19440 / HAR-13)</name>
    <dbReference type="NCBI Taxonomy" id="315277"/>
    <lineage>
        <taxon>Bacteria</taxon>
        <taxon>Pseudomonadati</taxon>
        <taxon>Chlamydiota</taxon>
        <taxon>Chlamydiia</taxon>
        <taxon>Chlamydiales</taxon>
        <taxon>Chlamydiaceae</taxon>
        <taxon>Chlamydia/Chlamydophila group</taxon>
        <taxon>Chlamydia</taxon>
    </lineage>
</organism>
<feature type="chain" id="PRO_0000235445" description="Phospho-N-acetylmuramoyl-pentapeptide-transferase">
    <location>
        <begin position="1"/>
        <end position="336"/>
    </location>
</feature>
<feature type="transmembrane region" description="Helical" evidence="1">
    <location>
        <begin position="1"/>
        <end position="21"/>
    </location>
</feature>
<feature type="transmembrane region" description="Helical" evidence="1">
    <location>
        <begin position="56"/>
        <end position="76"/>
    </location>
</feature>
<feature type="transmembrane region" description="Helical" evidence="1">
    <location>
        <begin position="78"/>
        <end position="98"/>
    </location>
</feature>
<feature type="transmembrane region" description="Helical" evidence="1">
    <location>
        <begin position="124"/>
        <end position="144"/>
    </location>
</feature>
<feature type="transmembrane region" description="Helical" evidence="1">
    <location>
        <begin position="148"/>
        <end position="168"/>
    </location>
</feature>
<feature type="transmembrane region" description="Helical" evidence="1">
    <location>
        <begin position="184"/>
        <end position="204"/>
    </location>
</feature>
<feature type="transmembrane region" description="Helical" evidence="1">
    <location>
        <begin position="210"/>
        <end position="230"/>
    </location>
</feature>
<feature type="transmembrane region" description="Helical" evidence="1">
    <location>
        <begin position="239"/>
        <end position="259"/>
    </location>
</feature>
<feature type="transmembrane region" description="Helical" evidence="1">
    <location>
        <begin position="264"/>
        <end position="284"/>
    </location>
</feature>
<feature type="transmembrane region" description="Helical" evidence="1">
    <location>
        <begin position="314"/>
        <end position="334"/>
    </location>
</feature>
<evidence type="ECO:0000255" key="1">
    <source>
        <dbReference type="HAMAP-Rule" id="MF_00038"/>
    </source>
</evidence>
<sequence length="336" mass="37091">MLPLTYVVKAFSIGLFFSLFLMKPLISWLKKQGFQDHIHKDHCEKLEELHKDKAYIPTAGGIVFVFASVLAVLLLFPIQLWSTWFCIGTILLWGALGWCDDQIKNRRRVGHGLSAKHKFLIQNCLAAGVVLPIMFAYKESFLSFHLPFLGIVSLPHHWWSYLLSFAIATLAIVGTSNSVNLTDGLDGLAAGAMVIACLGMLVVACTNGAPWAFICCVLLATLAGSCLGFLRYNKSPARVFMGDTGSLFLGAMLGMCAVLLRAEFLLLFMGGIFVLESLSVIVQVGSYKLRKKRVFLCAPLHHHYEYKGLSEKAVVRNFLIVELICVVVGIIAVFVD</sequence>